<organism>
    <name type="scientific">Staphylococcus aureus (strain bovine RF122 / ET3-1)</name>
    <dbReference type="NCBI Taxonomy" id="273036"/>
    <lineage>
        <taxon>Bacteria</taxon>
        <taxon>Bacillati</taxon>
        <taxon>Bacillota</taxon>
        <taxon>Bacilli</taxon>
        <taxon>Bacillales</taxon>
        <taxon>Staphylococcaceae</taxon>
        <taxon>Staphylococcus</taxon>
    </lineage>
</organism>
<accession>Q2YUT0</accession>
<evidence type="ECO:0000255" key="1">
    <source>
        <dbReference type="PROSITE-ProRule" id="PRU00303"/>
    </source>
</evidence>
<evidence type="ECO:0000305" key="2"/>
<feature type="signal peptide" evidence="1">
    <location>
        <begin position="1"/>
        <end position="24"/>
    </location>
</feature>
<feature type="chain" id="PRO_0000282094" description="Uncharacterized lipoprotein SAB0040">
    <location>
        <begin position="25"/>
        <end position="256"/>
    </location>
</feature>
<feature type="lipid moiety-binding region" description="N-palmitoyl cysteine" evidence="1">
    <location>
        <position position="25"/>
    </location>
</feature>
<feature type="lipid moiety-binding region" description="S-diacylglycerol cysteine" evidence="1">
    <location>
        <position position="25"/>
    </location>
</feature>
<dbReference type="EMBL" id="AJ938182">
    <property type="protein sequence ID" value="CAI79728.1"/>
    <property type="molecule type" value="Genomic_DNA"/>
</dbReference>
<dbReference type="RefSeq" id="WP_011382150.1">
    <property type="nucleotide sequence ID" value="NC_007622.1"/>
</dbReference>
<dbReference type="SMR" id="Q2YUT0"/>
<dbReference type="KEGG" id="sab:SAB0040"/>
<dbReference type="HOGENOM" id="CLU_071589_0_1_9"/>
<dbReference type="GO" id="GO:0005886">
    <property type="term" value="C:plasma membrane"/>
    <property type="evidence" value="ECO:0007669"/>
    <property type="project" value="UniProtKB-SubCell"/>
</dbReference>
<dbReference type="Gene3D" id="2.50.20.40">
    <property type="match status" value="1"/>
</dbReference>
<dbReference type="InterPro" id="IPR007595">
    <property type="entry name" value="Csa"/>
</dbReference>
<dbReference type="InterPro" id="IPR038641">
    <property type="entry name" value="Csa_sf"/>
</dbReference>
<dbReference type="NCBIfam" id="TIGR01742">
    <property type="entry name" value="SA_tandem_lipo"/>
    <property type="match status" value="1"/>
</dbReference>
<dbReference type="Pfam" id="PF04507">
    <property type="entry name" value="DUF576"/>
    <property type="match status" value="1"/>
</dbReference>
<dbReference type="PROSITE" id="PS51257">
    <property type="entry name" value="PROKAR_LIPOPROTEIN"/>
    <property type="match status" value="1"/>
</dbReference>
<reference key="1">
    <citation type="journal article" date="2007" name="PLoS ONE">
        <title>Molecular correlates of host specialization in Staphylococcus aureus.</title>
        <authorList>
            <person name="Herron-Olson L."/>
            <person name="Fitzgerald J.R."/>
            <person name="Musser J.M."/>
            <person name="Kapur V."/>
        </authorList>
    </citation>
    <scope>NUCLEOTIDE SEQUENCE [LARGE SCALE GENOMIC DNA]</scope>
    <source>
        <strain>bovine RF122 / ET3-1</strain>
    </source>
</reference>
<sequence>MIKRVNKLVIGISLLFLVISITAGCGMGKEEEIKKSFEKTLSMYPIKNLEDLYDKKGYRDDQFDKNDKGTWIVRSSMSIQPNGKDMNVKGMVLYMIRNTRTTNGYYYVDVIEREDKGIHRDNEKRYPVKMVDNKIIPTKEIEDEKIKKEIENFKFFVQYGNFKDLSKYKDGDISYNPEAPIYSAKYQLTNNDYNVKQLRKRYNIPTNKAPKLLLKGTGNLKGSSVGYKDIEFTFVEKKGENIYFSDSLHLEPSEDK</sequence>
<keyword id="KW-1003">Cell membrane</keyword>
<keyword id="KW-0449">Lipoprotein</keyword>
<keyword id="KW-0472">Membrane</keyword>
<keyword id="KW-0564">Palmitate</keyword>
<keyword id="KW-0732">Signal</keyword>
<gene>
    <name type="ordered locus">SAB0040</name>
</gene>
<comment type="subcellular location">
    <subcellularLocation>
        <location evidence="1">Cell membrane</location>
        <topology evidence="1">Lipid-anchor</topology>
    </subcellularLocation>
</comment>
<comment type="similarity">
    <text evidence="2">Belongs to the staphylococcal tandem lipoprotein family.</text>
</comment>
<name>Y040_STAAB</name>
<proteinExistence type="inferred from homology"/>
<protein>
    <recommendedName>
        <fullName>Uncharacterized lipoprotein SAB0040</fullName>
    </recommendedName>
</protein>